<proteinExistence type="inferred from homology"/>
<evidence type="ECO:0000250" key="1"/>
<evidence type="ECO:0000255" key="2"/>
<evidence type="ECO:0000255" key="3">
    <source>
        <dbReference type="PROSITE-ProRule" id="PRU01103"/>
    </source>
</evidence>
<evidence type="ECO:0000255" key="4">
    <source>
        <dbReference type="PROSITE-ProRule" id="PRU10094"/>
    </source>
</evidence>
<evidence type="ECO:0000256" key="5">
    <source>
        <dbReference type="SAM" id="MobiDB-lite"/>
    </source>
</evidence>
<evidence type="ECO:0000305" key="6"/>
<gene>
    <name type="ORF">AFUA_3G01220</name>
</gene>
<accession>Q4WFS2</accession>
<name>Y1220_ASPFU</name>
<dbReference type="EC" id="3.4.23.-"/>
<dbReference type="EMBL" id="AAHF01000010">
    <property type="protein sequence ID" value="EAL86405.2"/>
    <property type="molecule type" value="Genomic_DNA"/>
</dbReference>
<dbReference type="RefSeq" id="XP_748443.2">
    <property type="nucleotide sequence ID" value="XM_743350.2"/>
</dbReference>
<dbReference type="SMR" id="Q4WFS2"/>
<dbReference type="STRING" id="330879.Q4WFS2"/>
<dbReference type="MEROPS" id="A01.081"/>
<dbReference type="EnsemblFungi" id="EAL86405">
    <property type="protein sequence ID" value="EAL86405"/>
    <property type="gene ID" value="AFUA_3G01220"/>
</dbReference>
<dbReference type="GeneID" id="3506170"/>
<dbReference type="KEGG" id="afm:AFUA_3G01220"/>
<dbReference type="VEuPathDB" id="FungiDB:Afu3g01220"/>
<dbReference type="eggNOG" id="KOG1339">
    <property type="taxonomic scope" value="Eukaryota"/>
</dbReference>
<dbReference type="HOGENOM" id="CLU_035052_1_0_1"/>
<dbReference type="InParanoid" id="Q4WFS2"/>
<dbReference type="OMA" id="PIFATMY"/>
<dbReference type="OrthoDB" id="15189at2759"/>
<dbReference type="Proteomes" id="UP000002530">
    <property type="component" value="Chromosome 3"/>
</dbReference>
<dbReference type="GO" id="GO:0005576">
    <property type="term" value="C:extracellular region"/>
    <property type="evidence" value="ECO:0007669"/>
    <property type="project" value="UniProtKB-SubCell"/>
</dbReference>
<dbReference type="GO" id="GO:0000324">
    <property type="term" value="C:fungal-type vacuole"/>
    <property type="evidence" value="ECO:0000318"/>
    <property type="project" value="GO_Central"/>
</dbReference>
<dbReference type="GO" id="GO:0004190">
    <property type="term" value="F:aspartic-type endopeptidase activity"/>
    <property type="evidence" value="ECO:0000318"/>
    <property type="project" value="GO_Central"/>
</dbReference>
<dbReference type="GO" id="GO:0006508">
    <property type="term" value="P:proteolysis"/>
    <property type="evidence" value="ECO:0000318"/>
    <property type="project" value="GO_Central"/>
</dbReference>
<dbReference type="CDD" id="cd05471">
    <property type="entry name" value="pepsin_like"/>
    <property type="match status" value="1"/>
</dbReference>
<dbReference type="FunFam" id="2.40.70.10:FF:000187">
    <property type="entry name" value="Aspartic-type endopeptidase, putative"/>
    <property type="match status" value="1"/>
</dbReference>
<dbReference type="FunFam" id="2.40.70.10:FF:000251">
    <property type="entry name" value="Probable aspartic-type endopeptidase AFUA_3G01220"/>
    <property type="match status" value="1"/>
</dbReference>
<dbReference type="Gene3D" id="2.40.70.10">
    <property type="entry name" value="Acid Proteases"/>
    <property type="match status" value="2"/>
</dbReference>
<dbReference type="InterPro" id="IPR001461">
    <property type="entry name" value="Aspartic_peptidase_A1"/>
</dbReference>
<dbReference type="InterPro" id="IPR001969">
    <property type="entry name" value="Aspartic_peptidase_AS"/>
</dbReference>
<dbReference type="InterPro" id="IPR034164">
    <property type="entry name" value="Pepsin-like_dom"/>
</dbReference>
<dbReference type="InterPro" id="IPR033121">
    <property type="entry name" value="PEPTIDASE_A1"/>
</dbReference>
<dbReference type="InterPro" id="IPR021109">
    <property type="entry name" value="Peptidase_aspartic_dom_sf"/>
</dbReference>
<dbReference type="PANTHER" id="PTHR47966">
    <property type="entry name" value="BETA-SITE APP-CLEAVING ENZYME, ISOFORM A-RELATED"/>
    <property type="match status" value="1"/>
</dbReference>
<dbReference type="PANTHER" id="PTHR47966:SF47">
    <property type="entry name" value="ENDOPEPTIDASE, PUTATIVE (AFU_ORTHOLOGUE AFUA_3G01220)-RELATED"/>
    <property type="match status" value="1"/>
</dbReference>
<dbReference type="Pfam" id="PF00026">
    <property type="entry name" value="Asp"/>
    <property type="match status" value="1"/>
</dbReference>
<dbReference type="PRINTS" id="PR00792">
    <property type="entry name" value="PEPSIN"/>
</dbReference>
<dbReference type="SUPFAM" id="SSF50630">
    <property type="entry name" value="Acid proteases"/>
    <property type="match status" value="1"/>
</dbReference>
<dbReference type="PROSITE" id="PS00141">
    <property type="entry name" value="ASP_PROTEASE"/>
    <property type="match status" value="1"/>
</dbReference>
<dbReference type="PROSITE" id="PS51767">
    <property type="entry name" value="PEPTIDASE_A1"/>
    <property type="match status" value="1"/>
</dbReference>
<feature type="signal peptide" evidence="2">
    <location>
        <begin position="1"/>
        <end position="20"/>
    </location>
</feature>
<feature type="chain" id="PRO_0000406417" description="Probable aspartic-type endopeptidase AFUA_3G01220">
    <location>
        <begin position="21"/>
        <end position="439"/>
    </location>
</feature>
<feature type="domain" description="Peptidase A1" evidence="3">
    <location>
        <begin position="95"/>
        <end position="436"/>
    </location>
</feature>
<feature type="region of interest" description="Disordered" evidence="5">
    <location>
        <begin position="31"/>
        <end position="50"/>
    </location>
</feature>
<feature type="compositionally biased region" description="Low complexity" evidence="5">
    <location>
        <begin position="32"/>
        <end position="45"/>
    </location>
</feature>
<feature type="active site" evidence="4">
    <location>
        <position position="111"/>
    </location>
</feature>
<feature type="active site" evidence="4">
    <location>
        <position position="323"/>
    </location>
</feature>
<feature type="glycosylation site" description="N-linked (GlcNAc...) asparagine" evidence="2">
    <location>
        <position position="103"/>
    </location>
</feature>
<feature type="glycosylation site" description="N-linked (GlcNAc...) asparagine" evidence="2">
    <location>
        <position position="149"/>
    </location>
</feature>
<feature type="glycosylation site" description="N-linked (GlcNAc...) asparagine" evidence="2">
    <location>
        <position position="178"/>
    </location>
</feature>
<feature type="glycosylation site" description="N-linked (GlcNAc...) asparagine" evidence="2">
    <location>
        <position position="187"/>
    </location>
</feature>
<feature type="glycosylation site" description="N-linked (GlcNAc...) asparagine" evidence="2">
    <location>
        <position position="253"/>
    </location>
</feature>
<feature type="glycosylation site" description="N-linked (GlcNAc...) asparagine" evidence="2">
    <location>
        <position position="256"/>
    </location>
</feature>
<feature type="glycosylation site" description="N-linked (GlcNAc...) asparagine" evidence="2">
    <location>
        <position position="276"/>
    </location>
</feature>
<feature type="glycosylation site" description="N-linked (GlcNAc...) asparagine" evidence="2">
    <location>
        <position position="308"/>
    </location>
</feature>
<feature type="glycosylation site" description="N-linked (GlcNAc...) asparagine" evidence="2">
    <location>
        <position position="361"/>
    </location>
</feature>
<feature type="glycosylation site" description="N-linked (GlcNAc...) asparagine" evidence="2">
    <location>
        <position position="394"/>
    </location>
</feature>
<reference key="1">
    <citation type="journal article" date="2005" name="Nature">
        <title>Genomic sequence of the pathogenic and allergenic filamentous fungus Aspergillus fumigatus.</title>
        <authorList>
            <person name="Nierman W.C."/>
            <person name="Pain A."/>
            <person name="Anderson M.J."/>
            <person name="Wortman J.R."/>
            <person name="Kim H.S."/>
            <person name="Arroyo J."/>
            <person name="Berriman M."/>
            <person name="Abe K."/>
            <person name="Archer D.B."/>
            <person name="Bermejo C."/>
            <person name="Bennett J.W."/>
            <person name="Bowyer P."/>
            <person name="Chen D."/>
            <person name="Collins M."/>
            <person name="Coulsen R."/>
            <person name="Davies R."/>
            <person name="Dyer P.S."/>
            <person name="Farman M.L."/>
            <person name="Fedorova N."/>
            <person name="Fedorova N.D."/>
            <person name="Feldblyum T.V."/>
            <person name="Fischer R."/>
            <person name="Fosker N."/>
            <person name="Fraser A."/>
            <person name="Garcia J.L."/>
            <person name="Garcia M.J."/>
            <person name="Goble A."/>
            <person name="Goldman G.H."/>
            <person name="Gomi K."/>
            <person name="Griffith-Jones S."/>
            <person name="Gwilliam R."/>
            <person name="Haas B.J."/>
            <person name="Haas H."/>
            <person name="Harris D.E."/>
            <person name="Horiuchi H."/>
            <person name="Huang J."/>
            <person name="Humphray S."/>
            <person name="Jimenez J."/>
            <person name="Keller N."/>
            <person name="Khouri H."/>
            <person name="Kitamoto K."/>
            <person name="Kobayashi T."/>
            <person name="Konzack S."/>
            <person name="Kulkarni R."/>
            <person name="Kumagai T."/>
            <person name="Lafton A."/>
            <person name="Latge J.-P."/>
            <person name="Li W."/>
            <person name="Lord A."/>
            <person name="Lu C."/>
            <person name="Majoros W.H."/>
            <person name="May G.S."/>
            <person name="Miller B.L."/>
            <person name="Mohamoud Y."/>
            <person name="Molina M."/>
            <person name="Monod M."/>
            <person name="Mouyna I."/>
            <person name="Mulligan S."/>
            <person name="Murphy L.D."/>
            <person name="O'Neil S."/>
            <person name="Paulsen I."/>
            <person name="Penalva M.A."/>
            <person name="Pertea M."/>
            <person name="Price C."/>
            <person name="Pritchard B.L."/>
            <person name="Quail M.A."/>
            <person name="Rabbinowitsch E."/>
            <person name="Rawlins N."/>
            <person name="Rajandream M.A."/>
            <person name="Reichard U."/>
            <person name="Renauld H."/>
            <person name="Robson G.D."/>
            <person name="Rodriguez de Cordoba S."/>
            <person name="Rodriguez-Pena J.M."/>
            <person name="Ronning C.M."/>
            <person name="Rutter S."/>
            <person name="Salzberg S.L."/>
            <person name="Sanchez M."/>
            <person name="Sanchez-Ferrero J.C."/>
            <person name="Saunders D."/>
            <person name="Seeger K."/>
            <person name="Squares R."/>
            <person name="Squares S."/>
            <person name="Takeuchi M."/>
            <person name="Tekaia F."/>
            <person name="Turner G."/>
            <person name="Vazquez de Aldana C.R."/>
            <person name="Weidman J."/>
            <person name="White O."/>
            <person name="Woodward J.R."/>
            <person name="Yu J.-H."/>
            <person name="Fraser C.M."/>
            <person name="Galagan J.E."/>
            <person name="Asai K."/>
            <person name="Machida M."/>
            <person name="Hall N."/>
            <person name="Barrell B.G."/>
            <person name="Denning D.W."/>
        </authorList>
    </citation>
    <scope>NUCLEOTIDE SEQUENCE [LARGE SCALE GENOMIC DNA]</scope>
    <source>
        <strain>ATCC MYA-4609 / CBS 101355 / FGSC A1100 / Af293</strain>
    </source>
</reference>
<keyword id="KW-0064">Aspartyl protease</keyword>
<keyword id="KW-0325">Glycoprotein</keyword>
<keyword id="KW-0378">Hydrolase</keyword>
<keyword id="KW-0645">Protease</keyword>
<keyword id="KW-1185">Reference proteome</keyword>
<keyword id="KW-0964">Secreted</keyword>
<keyword id="KW-0732">Signal</keyword>
<keyword id="KW-0843">Virulence</keyword>
<sequence>MHFSIGSLFLYLIASASCTAASPQYIQRSRRTPFTTSTSKPSAFTNPSTDTATTPYVLELTKINNKGNARSAVELNSQVRSGSANLVSFAEGVGFATSINIGNQTFEVVIDTGSSDLWVVRDGFICIDPVSRKEVAQSECRFGPAYAPNTTFHEVVGEFVDIKYADGEILSGVIGTENVTLAGITVNQTIGVMDYAGWYGDGVTSGLMGLAYSSLASAYTTNNRQPRLYNPIFATMYEQGLIDPIFSMVMNRNASNGTAAGYLTLGGLPPVDINGNFSTTPILITNIKGYPKDYDFYAVNIDGVALGNRSLPEAAGGIQYIIDSGTTLNYYPTPVADSVNAAFIPPAVYNDYDGAYVVDCNATASVHGVMIGGSTFYINPTDMILPGGMDNSGNKTCISGINAGGDVGQGIFVLGGTFLRNVVAVFDVGAAEMRFAASA</sequence>
<protein>
    <recommendedName>
        <fullName>Probable aspartic-type endopeptidase AFUA_3G01220</fullName>
        <ecNumber>3.4.23.-</ecNumber>
    </recommendedName>
</protein>
<comment type="function">
    <text evidence="1">Probable aspartic-type endopeptidase which contributes to virulence.</text>
</comment>
<comment type="subcellular location">
    <subcellularLocation>
        <location evidence="6">Secreted</location>
    </subcellularLocation>
</comment>
<comment type="similarity">
    <text evidence="6">Belongs to the peptidase A1 family.</text>
</comment>
<organism>
    <name type="scientific">Aspergillus fumigatus (strain ATCC MYA-4609 / CBS 101355 / FGSC A1100 / Af293)</name>
    <name type="common">Neosartorya fumigata</name>
    <dbReference type="NCBI Taxonomy" id="330879"/>
    <lineage>
        <taxon>Eukaryota</taxon>
        <taxon>Fungi</taxon>
        <taxon>Dikarya</taxon>
        <taxon>Ascomycota</taxon>
        <taxon>Pezizomycotina</taxon>
        <taxon>Eurotiomycetes</taxon>
        <taxon>Eurotiomycetidae</taxon>
        <taxon>Eurotiales</taxon>
        <taxon>Aspergillaceae</taxon>
        <taxon>Aspergillus</taxon>
        <taxon>Aspergillus subgen. Fumigati</taxon>
    </lineage>
</organism>